<organism>
    <name type="scientific">Xenopus tropicalis</name>
    <name type="common">Western clawed frog</name>
    <name type="synonym">Silurana tropicalis</name>
    <dbReference type="NCBI Taxonomy" id="8364"/>
    <lineage>
        <taxon>Eukaryota</taxon>
        <taxon>Metazoa</taxon>
        <taxon>Chordata</taxon>
        <taxon>Craniata</taxon>
        <taxon>Vertebrata</taxon>
        <taxon>Euteleostomi</taxon>
        <taxon>Amphibia</taxon>
        <taxon>Batrachia</taxon>
        <taxon>Anura</taxon>
        <taxon>Pipoidea</taxon>
        <taxon>Pipidae</taxon>
        <taxon>Xenopodinae</taxon>
        <taxon>Xenopus</taxon>
        <taxon>Silurana</taxon>
    </lineage>
</organism>
<proteinExistence type="evidence at transcript level"/>
<protein>
    <recommendedName>
        <fullName>G kinase-anchoring protein 1</fullName>
    </recommendedName>
</protein>
<feature type="chain" id="PRO_0000315660" description="G kinase-anchoring protein 1">
    <location>
        <begin position="1"/>
        <end position="363"/>
    </location>
</feature>
<feature type="region of interest" description="Disordered" evidence="3">
    <location>
        <begin position="22"/>
        <end position="124"/>
    </location>
</feature>
<feature type="region of interest" description="Disordered" evidence="3">
    <location>
        <begin position="143"/>
        <end position="185"/>
    </location>
</feature>
<feature type="coiled-coil region" evidence="2">
    <location>
        <begin position="54"/>
        <end position="79"/>
    </location>
</feature>
<feature type="coiled-coil region" evidence="2">
    <location>
        <begin position="247"/>
        <end position="298"/>
    </location>
</feature>
<feature type="coiled-coil region" evidence="2">
    <location>
        <begin position="328"/>
        <end position="348"/>
    </location>
</feature>
<feature type="compositionally biased region" description="Basic and acidic residues" evidence="3">
    <location>
        <begin position="98"/>
        <end position="107"/>
    </location>
</feature>
<feature type="compositionally biased region" description="Basic residues" evidence="3">
    <location>
        <begin position="160"/>
        <end position="170"/>
    </location>
</feature>
<feature type="sequence conflict" description="In Ref. 2; AAH80476/AAI18717." evidence="4" ref="2">
    <original>Y</original>
    <variation>S</variation>
    <location>
        <position position="107"/>
    </location>
</feature>
<evidence type="ECO:0000250" key="1">
    <source>
        <dbReference type="UniProtKB" id="Q9JMB0"/>
    </source>
</evidence>
<evidence type="ECO:0000255" key="2"/>
<evidence type="ECO:0000256" key="3">
    <source>
        <dbReference type="SAM" id="MobiDB-lite"/>
    </source>
</evidence>
<evidence type="ECO:0000305" key="4"/>
<accession>Q5M8L3</accession>
<accession>Q0VFS6</accession>
<accession>Q66KB2</accession>
<dbReference type="EMBL" id="CR761519">
    <property type="protein sequence ID" value="CAJ82599.1"/>
    <property type="molecule type" value="mRNA"/>
</dbReference>
<dbReference type="EMBL" id="BC080476">
    <property type="protein sequence ID" value="AAH80476.1"/>
    <property type="status" value="ALT_SEQ"/>
    <property type="molecule type" value="mRNA"/>
</dbReference>
<dbReference type="EMBL" id="BC087974">
    <property type="protein sequence ID" value="AAH87974.1"/>
    <property type="molecule type" value="mRNA"/>
</dbReference>
<dbReference type="EMBL" id="BC118716">
    <property type="protein sequence ID" value="AAI18717.1"/>
    <property type="status" value="ALT_SEQ"/>
    <property type="molecule type" value="mRNA"/>
</dbReference>
<dbReference type="RefSeq" id="NP_001011266.1">
    <property type="nucleotide sequence ID" value="NM_001011266.1"/>
</dbReference>
<dbReference type="SMR" id="Q5M8L3"/>
<dbReference type="FunCoup" id="Q5M8L3">
    <property type="interactions" value="845"/>
</dbReference>
<dbReference type="STRING" id="8364.ENSXETP00000046805"/>
<dbReference type="PaxDb" id="8364-ENSXETP00000057503"/>
<dbReference type="DNASU" id="496717"/>
<dbReference type="GeneID" id="496717"/>
<dbReference type="KEGG" id="xtr:496717"/>
<dbReference type="AGR" id="Xenbase:XB-GENE-1002568"/>
<dbReference type="CTD" id="80318"/>
<dbReference type="Xenbase" id="XB-GENE-1002568">
    <property type="gene designation" value="gkap1"/>
</dbReference>
<dbReference type="eggNOG" id="ENOG502QUT6">
    <property type="taxonomic scope" value="Eukaryota"/>
</dbReference>
<dbReference type="HOGENOM" id="CLU_065161_1_0_1"/>
<dbReference type="InParanoid" id="Q5M8L3"/>
<dbReference type="OMA" id="RKNHQGR"/>
<dbReference type="OrthoDB" id="5864420at2759"/>
<dbReference type="PhylomeDB" id="Q5M8L3"/>
<dbReference type="Proteomes" id="UP000008143">
    <property type="component" value="Chromosome 1"/>
</dbReference>
<dbReference type="Bgee" id="ENSXETG00000016759">
    <property type="expression patterns" value="Expressed in testis and 12 other cell types or tissues"/>
</dbReference>
<dbReference type="GO" id="GO:0005794">
    <property type="term" value="C:Golgi apparatus"/>
    <property type="evidence" value="ECO:0007669"/>
    <property type="project" value="UniProtKB-SubCell"/>
</dbReference>
<dbReference type="GO" id="GO:0007165">
    <property type="term" value="P:signal transduction"/>
    <property type="evidence" value="ECO:0007669"/>
    <property type="project" value="InterPro"/>
</dbReference>
<dbReference type="InterPro" id="IPR026109">
    <property type="entry name" value="GKAP1"/>
</dbReference>
<dbReference type="PANTHER" id="PTHR14899">
    <property type="entry name" value="G KINASE ANCHORING PROTEIN 1"/>
    <property type="match status" value="1"/>
</dbReference>
<dbReference type="PANTHER" id="PTHR14899:SF0">
    <property type="entry name" value="G KINASE-ANCHORING PROTEIN 1"/>
    <property type="match status" value="1"/>
</dbReference>
<dbReference type="PRINTS" id="PR02083">
    <property type="entry name" value="GKINASEAP1"/>
</dbReference>
<keyword id="KW-0175">Coiled coil</keyword>
<keyword id="KW-0333">Golgi apparatus</keyword>
<keyword id="KW-1185">Reference proteome</keyword>
<reference key="1">
    <citation type="submission" date="2006-10" db="EMBL/GenBank/DDBJ databases">
        <authorList>
            <consortium name="Sanger Xenopus tropicalis EST/cDNA project"/>
        </authorList>
    </citation>
    <scope>NUCLEOTIDE SEQUENCE [LARGE SCALE MRNA]</scope>
    <source>
        <tissue>Gastrula</tissue>
    </source>
</reference>
<reference key="2">
    <citation type="submission" date="2004-12" db="EMBL/GenBank/DDBJ databases">
        <authorList>
            <consortium name="NIH - Xenopus Gene Collection (XGC) project"/>
        </authorList>
    </citation>
    <scope>NUCLEOTIDE SEQUENCE [LARGE SCALE MRNA]</scope>
    <source>
        <tissue>Embryo</tissue>
    </source>
</reference>
<comment type="function">
    <text evidence="1">May play a role in the regulation of insulin-dependent IRS1 tyrosine phosphorylation in adipocytes.</text>
</comment>
<comment type="subcellular location">
    <subcellularLocation>
        <location evidence="1">Golgi apparatus</location>
    </subcellularLocation>
</comment>
<comment type="similarity">
    <text evidence="4">Belongs to the GKAP1 family.</text>
</comment>
<comment type="sequence caution" evidence="4">
    <conflict type="miscellaneous discrepancy">
        <sequence resource="EMBL-CDS" id="AAH80476"/>
    </conflict>
    <text>Contaminating sequence. Potential poly-A sequence.</text>
</comment>
<comment type="sequence caution" evidence="4">
    <conflict type="frameshift">
        <sequence resource="EMBL-CDS" id="AAI18717"/>
    </conflict>
</comment>
<comment type="sequence caution" evidence="4">
    <conflict type="miscellaneous discrepancy">
        <sequence resource="EMBL-CDS" id="AAI18717"/>
    </conflict>
    <text>Contaminating sequence. Potential poly-A sequence.</text>
</comment>
<gene>
    <name type="primary">gkap1</name>
    <name type="ORF">TGas066g20.1</name>
</gene>
<sequence length="363" mass="41309">MASAVVSMVPTTASRFALLQVDSSSDSDSEKARGAHATGKARSGSAAKGKSKGNEKKKEKRRKKKEQQQSEANELRNLAFKKIPSKPSQGIGGALQEHSTHNVPKEYQEDDWQQWQQRDEQLTSDMFEADLEKALMLSKLEYEESKDNGNEVNGVPQSKKVNKKDKRRNNQGKDKPLTVPLKDFQLEDQQAKKQEELKSPAMPQDRGFFNKLEEDVTKIILKEKRKEHSSDVTESFSTPDYSMEPALKDGKTEVLKQEIEKKEAELKQMKSIISQWEAKYREVKARNSQLLKMLQEGEMKDKAEILLQVDELLSIKNELTLQVTTLHAALEQERSKVKVLQAEQVKYQGGKKSKKNPESEHGR</sequence>
<name>GKAP1_XENTR</name>